<evidence type="ECO:0000255" key="1">
    <source>
        <dbReference type="HAMAP-Rule" id="MF_00741"/>
    </source>
</evidence>
<comment type="catalytic activity">
    <reaction evidence="1">
        <text>2-formamido-N(1)-(5-O-phospho-beta-D-ribosyl)acetamidine + ATP = 5-amino-1-(5-phospho-beta-D-ribosyl)imidazole + ADP + phosphate + H(+)</text>
        <dbReference type="Rhea" id="RHEA:23032"/>
        <dbReference type="ChEBI" id="CHEBI:15378"/>
        <dbReference type="ChEBI" id="CHEBI:30616"/>
        <dbReference type="ChEBI" id="CHEBI:43474"/>
        <dbReference type="ChEBI" id="CHEBI:137981"/>
        <dbReference type="ChEBI" id="CHEBI:147287"/>
        <dbReference type="ChEBI" id="CHEBI:456216"/>
        <dbReference type="EC" id="6.3.3.1"/>
    </reaction>
</comment>
<comment type="pathway">
    <text evidence="1">Purine metabolism; IMP biosynthesis via de novo pathway; 5-amino-1-(5-phospho-D-ribosyl)imidazole from N(2)-formyl-N(1)-(5-phospho-D-ribosyl)glycinamide: step 2/2.</text>
</comment>
<comment type="subcellular location">
    <subcellularLocation>
        <location evidence="1">Cytoplasm</location>
    </subcellularLocation>
</comment>
<comment type="similarity">
    <text evidence="1">Belongs to the AIR synthase family.</text>
</comment>
<accession>Q47Z78</accession>
<organism>
    <name type="scientific">Colwellia psychrerythraea (strain 34H / ATCC BAA-681)</name>
    <name type="common">Vibrio psychroerythus</name>
    <dbReference type="NCBI Taxonomy" id="167879"/>
    <lineage>
        <taxon>Bacteria</taxon>
        <taxon>Pseudomonadati</taxon>
        <taxon>Pseudomonadota</taxon>
        <taxon>Gammaproteobacteria</taxon>
        <taxon>Alteromonadales</taxon>
        <taxon>Colwelliaceae</taxon>
        <taxon>Colwellia</taxon>
    </lineage>
</organism>
<feature type="chain" id="PRO_0000258348" description="Phosphoribosylformylglycinamidine cyclo-ligase">
    <location>
        <begin position="1"/>
        <end position="346"/>
    </location>
</feature>
<keyword id="KW-0067">ATP-binding</keyword>
<keyword id="KW-0963">Cytoplasm</keyword>
<keyword id="KW-0436">Ligase</keyword>
<keyword id="KW-0547">Nucleotide-binding</keyword>
<keyword id="KW-0658">Purine biosynthesis</keyword>
<protein>
    <recommendedName>
        <fullName evidence="1">Phosphoribosylformylglycinamidine cyclo-ligase</fullName>
        <ecNumber evidence="1">6.3.3.1</ecNumber>
    </recommendedName>
    <alternativeName>
        <fullName evidence="1">AIR synthase</fullName>
    </alternativeName>
    <alternativeName>
        <fullName evidence="1">AIRS</fullName>
    </alternativeName>
    <alternativeName>
        <fullName evidence="1">Phosphoribosyl-aminoimidazole synthetase</fullName>
    </alternativeName>
</protein>
<reference key="1">
    <citation type="journal article" date="2005" name="Proc. Natl. Acad. Sci. U.S.A.">
        <title>The psychrophilic lifestyle as revealed by the genome sequence of Colwellia psychrerythraea 34H through genomic and proteomic analyses.</title>
        <authorList>
            <person name="Methe B.A."/>
            <person name="Nelson K.E."/>
            <person name="Deming J.W."/>
            <person name="Momen B."/>
            <person name="Melamud E."/>
            <person name="Zhang X."/>
            <person name="Moult J."/>
            <person name="Madupu R."/>
            <person name="Nelson W.C."/>
            <person name="Dodson R.J."/>
            <person name="Brinkac L.M."/>
            <person name="Daugherty S.C."/>
            <person name="Durkin A.S."/>
            <person name="DeBoy R.T."/>
            <person name="Kolonay J.F."/>
            <person name="Sullivan S.A."/>
            <person name="Zhou L."/>
            <person name="Davidsen T.M."/>
            <person name="Wu M."/>
            <person name="Huston A.L."/>
            <person name="Lewis M."/>
            <person name="Weaver B."/>
            <person name="Weidman J.F."/>
            <person name="Khouri H."/>
            <person name="Utterback T.R."/>
            <person name="Feldblyum T.V."/>
            <person name="Fraser C.M."/>
        </authorList>
    </citation>
    <scope>NUCLEOTIDE SEQUENCE [LARGE SCALE GENOMIC DNA]</scope>
    <source>
        <strain>34H / ATCC BAA-681</strain>
    </source>
</reference>
<sequence length="346" mass="36849">MSEQKQSLSYKDAGVDIDAGNALVENIKGAVKRTTRPEVMGGLGGFGSVCQLPTGYKEPVLVAGTDGVGTKLRLAIDLAKHDTVGIDLVAMCVNDLIVQGAEPLFFLDYYATAKLDVAVASSVVEGIAEGCIQSGCALVGGETAEMPGMYHKGDYDIAGFCVGVAEKSRLIDGTNVAAGDQLIALGASGPHSNGFSLIRKVLEVNNTDTNELLEGKKIADHLLEPTKIYVKSVLELLKNVDVHALSHITGGGFWENIPRVLPETAQAVIKGDSWQWPSIFNWLQENGNITEHEMYRTFNCGVGMVIVVPADKVAQSIEVLTAHGENAWHLGEIADKADGEEQVVFA</sequence>
<gene>
    <name evidence="1" type="primary">purM</name>
    <name type="ordered locus">CPS_3196</name>
</gene>
<dbReference type="EC" id="6.3.3.1" evidence="1"/>
<dbReference type="EMBL" id="CP000083">
    <property type="protein sequence ID" value="AAZ25488.1"/>
    <property type="molecule type" value="Genomic_DNA"/>
</dbReference>
<dbReference type="RefSeq" id="WP_011043979.1">
    <property type="nucleotide sequence ID" value="NC_003910.7"/>
</dbReference>
<dbReference type="SMR" id="Q47Z78"/>
<dbReference type="STRING" id="167879.CPS_3196"/>
<dbReference type="KEGG" id="cps:CPS_3196"/>
<dbReference type="eggNOG" id="COG0150">
    <property type="taxonomic scope" value="Bacteria"/>
</dbReference>
<dbReference type="HOGENOM" id="CLU_047116_0_0_6"/>
<dbReference type="UniPathway" id="UPA00074">
    <property type="reaction ID" value="UER00129"/>
</dbReference>
<dbReference type="Proteomes" id="UP000000547">
    <property type="component" value="Chromosome"/>
</dbReference>
<dbReference type="GO" id="GO:0005829">
    <property type="term" value="C:cytosol"/>
    <property type="evidence" value="ECO:0007669"/>
    <property type="project" value="TreeGrafter"/>
</dbReference>
<dbReference type="GO" id="GO:0005524">
    <property type="term" value="F:ATP binding"/>
    <property type="evidence" value="ECO:0007669"/>
    <property type="project" value="UniProtKB-KW"/>
</dbReference>
<dbReference type="GO" id="GO:0004637">
    <property type="term" value="F:phosphoribosylamine-glycine ligase activity"/>
    <property type="evidence" value="ECO:0007669"/>
    <property type="project" value="TreeGrafter"/>
</dbReference>
<dbReference type="GO" id="GO:0004641">
    <property type="term" value="F:phosphoribosylformylglycinamidine cyclo-ligase activity"/>
    <property type="evidence" value="ECO:0007669"/>
    <property type="project" value="UniProtKB-UniRule"/>
</dbReference>
<dbReference type="GO" id="GO:0006189">
    <property type="term" value="P:'de novo' IMP biosynthetic process"/>
    <property type="evidence" value="ECO:0007669"/>
    <property type="project" value="UniProtKB-UniRule"/>
</dbReference>
<dbReference type="GO" id="GO:0046084">
    <property type="term" value="P:adenine biosynthetic process"/>
    <property type="evidence" value="ECO:0007669"/>
    <property type="project" value="TreeGrafter"/>
</dbReference>
<dbReference type="CDD" id="cd02196">
    <property type="entry name" value="PurM"/>
    <property type="match status" value="1"/>
</dbReference>
<dbReference type="FunFam" id="3.30.1330.10:FF:000001">
    <property type="entry name" value="Phosphoribosylformylglycinamidine cyclo-ligase"/>
    <property type="match status" value="1"/>
</dbReference>
<dbReference type="FunFam" id="3.90.650.10:FF:000001">
    <property type="entry name" value="Phosphoribosylformylglycinamidine cyclo-ligase"/>
    <property type="match status" value="1"/>
</dbReference>
<dbReference type="Gene3D" id="3.90.650.10">
    <property type="entry name" value="PurM-like C-terminal domain"/>
    <property type="match status" value="1"/>
</dbReference>
<dbReference type="Gene3D" id="3.30.1330.10">
    <property type="entry name" value="PurM-like, N-terminal domain"/>
    <property type="match status" value="1"/>
</dbReference>
<dbReference type="HAMAP" id="MF_00741">
    <property type="entry name" value="AIRS"/>
    <property type="match status" value="1"/>
</dbReference>
<dbReference type="InterPro" id="IPR010918">
    <property type="entry name" value="PurM-like_C_dom"/>
</dbReference>
<dbReference type="InterPro" id="IPR036676">
    <property type="entry name" value="PurM-like_C_sf"/>
</dbReference>
<dbReference type="InterPro" id="IPR016188">
    <property type="entry name" value="PurM-like_N"/>
</dbReference>
<dbReference type="InterPro" id="IPR036921">
    <property type="entry name" value="PurM-like_N_sf"/>
</dbReference>
<dbReference type="InterPro" id="IPR004733">
    <property type="entry name" value="PurM_cligase"/>
</dbReference>
<dbReference type="NCBIfam" id="TIGR00878">
    <property type="entry name" value="purM"/>
    <property type="match status" value="1"/>
</dbReference>
<dbReference type="PANTHER" id="PTHR10520:SF12">
    <property type="entry name" value="TRIFUNCTIONAL PURINE BIOSYNTHETIC PROTEIN ADENOSINE-3"/>
    <property type="match status" value="1"/>
</dbReference>
<dbReference type="PANTHER" id="PTHR10520">
    <property type="entry name" value="TRIFUNCTIONAL PURINE BIOSYNTHETIC PROTEIN ADENOSINE-3-RELATED"/>
    <property type="match status" value="1"/>
</dbReference>
<dbReference type="Pfam" id="PF00586">
    <property type="entry name" value="AIRS"/>
    <property type="match status" value="1"/>
</dbReference>
<dbReference type="Pfam" id="PF02769">
    <property type="entry name" value="AIRS_C"/>
    <property type="match status" value="1"/>
</dbReference>
<dbReference type="SUPFAM" id="SSF56042">
    <property type="entry name" value="PurM C-terminal domain-like"/>
    <property type="match status" value="1"/>
</dbReference>
<dbReference type="SUPFAM" id="SSF55326">
    <property type="entry name" value="PurM N-terminal domain-like"/>
    <property type="match status" value="1"/>
</dbReference>
<proteinExistence type="inferred from homology"/>
<name>PUR5_COLP3</name>